<sequence length="377" mass="41639">MTDIKQILTDLIRFPSITPEDAGCQKYMIQFLEQLGFTCQQLNNGPVSNFFACYGKIGPLLVFAGHTDVVPVGEVSKWDTDPFSLEEKNGVLYGRGVADMKGSLACMLHMARRFIKTYPSFPGRLGFLITSGEEGDEFNLGTPYVMQKLEQQGIVIDYCIVGEPSSSLKAGDIIKIGRRGSLSAKIHLSGKQGHVAYPHLADNPIHRISPVLAELTSMQWDNGNAYFPPTSMQITYIHCGGHAGNIIPGELNLHLNFRYSTEQTDESLKTRVINAFTHHNLNPAIEWRLNGEPFLTNKGILLESCKQTVLEHIGTLPELSTSGGTSDGRFIAPYGVEVIELGLVNATIHQVNECTSLQDLNTLETMYFSICEKLLID</sequence>
<name>DAPE_LEGPC</name>
<protein>
    <recommendedName>
        <fullName evidence="1">Succinyl-diaminopimelate desuccinylase</fullName>
        <shortName evidence="1">SDAP desuccinylase</shortName>
        <ecNumber evidence="1">3.5.1.18</ecNumber>
    </recommendedName>
    <alternativeName>
        <fullName evidence="1">N-succinyl-LL-2,6-diaminoheptanedioate amidohydrolase</fullName>
    </alternativeName>
</protein>
<organism>
    <name type="scientific">Legionella pneumophila (strain Corby)</name>
    <dbReference type="NCBI Taxonomy" id="400673"/>
    <lineage>
        <taxon>Bacteria</taxon>
        <taxon>Pseudomonadati</taxon>
        <taxon>Pseudomonadota</taxon>
        <taxon>Gammaproteobacteria</taxon>
        <taxon>Legionellales</taxon>
        <taxon>Legionellaceae</taxon>
        <taxon>Legionella</taxon>
    </lineage>
</organism>
<feature type="chain" id="PRO_0000375598" description="Succinyl-diaminopimelate desuccinylase">
    <location>
        <begin position="1"/>
        <end position="377"/>
    </location>
</feature>
<feature type="active site" evidence="1">
    <location>
        <position position="68"/>
    </location>
</feature>
<feature type="active site" description="Proton acceptor" evidence="1">
    <location>
        <position position="133"/>
    </location>
</feature>
<feature type="binding site" evidence="1">
    <location>
        <position position="66"/>
    </location>
    <ligand>
        <name>Zn(2+)</name>
        <dbReference type="ChEBI" id="CHEBI:29105"/>
        <label>1</label>
    </ligand>
</feature>
<feature type="binding site" evidence="1">
    <location>
        <position position="99"/>
    </location>
    <ligand>
        <name>Zn(2+)</name>
        <dbReference type="ChEBI" id="CHEBI:29105"/>
        <label>1</label>
    </ligand>
</feature>
<feature type="binding site" evidence="1">
    <location>
        <position position="99"/>
    </location>
    <ligand>
        <name>Zn(2+)</name>
        <dbReference type="ChEBI" id="CHEBI:29105"/>
        <label>2</label>
    </ligand>
</feature>
<feature type="binding site" evidence="1">
    <location>
        <position position="134"/>
    </location>
    <ligand>
        <name>Zn(2+)</name>
        <dbReference type="ChEBI" id="CHEBI:29105"/>
        <label>2</label>
    </ligand>
</feature>
<feature type="binding site" evidence="1">
    <location>
        <position position="163"/>
    </location>
    <ligand>
        <name>Zn(2+)</name>
        <dbReference type="ChEBI" id="CHEBI:29105"/>
        <label>1</label>
    </ligand>
</feature>
<feature type="binding site" evidence="1">
    <location>
        <position position="349"/>
    </location>
    <ligand>
        <name>Zn(2+)</name>
        <dbReference type="ChEBI" id="CHEBI:29105"/>
        <label>2</label>
    </ligand>
</feature>
<proteinExistence type="inferred from homology"/>
<keyword id="KW-0028">Amino-acid biosynthesis</keyword>
<keyword id="KW-0170">Cobalt</keyword>
<keyword id="KW-0220">Diaminopimelate biosynthesis</keyword>
<keyword id="KW-0378">Hydrolase</keyword>
<keyword id="KW-0457">Lysine biosynthesis</keyword>
<keyword id="KW-0479">Metal-binding</keyword>
<keyword id="KW-0862">Zinc</keyword>
<evidence type="ECO:0000255" key="1">
    <source>
        <dbReference type="HAMAP-Rule" id="MF_01690"/>
    </source>
</evidence>
<accession>A5IG28</accession>
<comment type="function">
    <text evidence="1">Catalyzes the hydrolysis of N-succinyl-L,L-diaminopimelic acid (SDAP), forming succinate and LL-2,6-diaminopimelate (DAP), an intermediate involved in the bacterial biosynthesis of lysine and meso-diaminopimelic acid, an essential component of bacterial cell walls.</text>
</comment>
<comment type="catalytic activity">
    <reaction evidence="1">
        <text>N-succinyl-(2S,6S)-2,6-diaminopimelate + H2O = (2S,6S)-2,6-diaminopimelate + succinate</text>
        <dbReference type="Rhea" id="RHEA:22608"/>
        <dbReference type="ChEBI" id="CHEBI:15377"/>
        <dbReference type="ChEBI" id="CHEBI:30031"/>
        <dbReference type="ChEBI" id="CHEBI:57609"/>
        <dbReference type="ChEBI" id="CHEBI:58087"/>
        <dbReference type="EC" id="3.5.1.18"/>
    </reaction>
</comment>
<comment type="cofactor">
    <cofactor evidence="1">
        <name>Zn(2+)</name>
        <dbReference type="ChEBI" id="CHEBI:29105"/>
    </cofactor>
    <cofactor evidence="1">
        <name>Co(2+)</name>
        <dbReference type="ChEBI" id="CHEBI:48828"/>
    </cofactor>
    <text evidence="1">Binds 2 Zn(2+) or Co(2+) ions per subunit.</text>
</comment>
<comment type="pathway">
    <text evidence="1">Amino-acid biosynthesis; L-lysine biosynthesis via DAP pathway; LL-2,6-diaminopimelate from (S)-tetrahydrodipicolinate (succinylase route): step 3/3.</text>
</comment>
<comment type="subunit">
    <text evidence="1">Homodimer.</text>
</comment>
<comment type="similarity">
    <text evidence="1">Belongs to the peptidase M20A family. DapE subfamily.</text>
</comment>
<reference key="1">
    <citation type="submission" date="2006-11" db="EMBL/GenBank/DDBJ databases">
        <title>Identification and characterization of a new conjugation/ type IVA secretion system (trb/tra) of L. pneumophila Corby localized on a mobile genomic island.</title>
        <authorList>
            <person name="Gloeckner G."/>
            <person name="Albert-Weissenberger C."/>
            <person name="Weinmann E."/>
            <person name="Jacobi S."/>
            <person name="Schunder E."/>
            <person name="Steinert M."/>
            <person name="Buchrieser C."/>
            <person name="Hacker J."/>
            <person name="Heuner K."/>
        </authorList>
    </citation>
    <scope>NUCLEOTIDE SEQUENCE [LARGE SCALE GENOMIC DNA]</scope>
    <source>
        <strain>Corby</strain>
    </source>
</reference>
<gene>
    <name evidence="1" type="primary">dapE</name>
    <name type="ordered locus">LPC_2406</name>
</gene>
<dbReference type="EC" id="3.5.1.18" evidence="1"/>
<dbReference type="EMBL" id="CP000675">
    <property type="protein sequence ID" value="ABQ56328.1"/>
    <property type="molecule type" value="Genomic_DNA"/>
</dbReference>
<dbReference type="RefSeq" id="WP_011945991.1">
    <property type="nucleotide sequence ID" value="NC_009494.2"/>
</dbReference>
<dbReference type="SMR" id="A5IG28"/>
<dbReference type="KEGG" id="lpc:LPC_2406"/>
<dbReference type="HOGENOM" id="CLU_021802_4_0_6"/>
<dbReference type="UniPathway" id="UPA00034">
    <property type="reaction ID" value="UER00021"/>
</dbReference>
<dbReference type="GO" id="GO:0008777">
    <property type="term" value="F:acetylornithine deacetylase activity"/>
    <property type="evidence" value="ECO:0007669"/>
    <property type="project" value="TreeGrafter"/>
</dbReference>
<dbReference type="GO" id="GO:0050897">
    <property type="term" value="F:cobalt ion binding"/>
    <property type="evidence" value="ECO:0007669"/>
    <property type="project" value="UniProtKB-UniRule"/>
</dbReference>
<dbReference type="GO" id="GO:0009014">
    <property type="term" value="F:succinyl-diaminopimelate desuccinylase activity"/>
    <property type="evidence" value="ECO:0007669"/>
    <property type="project" value="UniProtKB-UniRule"/>
</dbReference>
<dbReference type="GO" id="GO:0008270">
    <property type="term" value="F:zinc ion binding"/>
    <property type="evidence" value="ECO:0007669"/>
    <property type="project" value="UniProtKB-UniRule"/>
</dbReference>
<dbReference type="GO" id="GO:0019877">
    <property type="term" value="P:diaminopimelate biosynthetic process"/>
    <property type="evidence" value="ECO:0007669"/>
    <property type="project" value="UniProtKB-UniRule"/>
</dbReference>
<dbReference type="GO" id="GO:0006526">
    <property type="term" value="P:L-arginine biosynthetic process"/>
    <property type="evidence" value="ECO:0007669"/>
    <property type="project" value="TreeGrafter"/>
</dbReference>
<dbReference type="GO" id="GO:0009089">
    <property type="term" value="P:lysine biosynthetic process via diaminopimelate"/>
    <property type="evidence" value="ECO:0007669"/>
    <property type="project" value="UniProtKB-UniRule"/>
</dbReference>
<dbReference type="CDD" id="cd03891">
    <property type="entry name" value="M20_DapE_proteobac"/>
    <property type="match status" value="1"/>
</dbReference>
<dbReference type="Gene3D" id="3.40.630.10">
    <property type="entry name" value="Zn peptidases"/>
    <property type="match status" value="2"/>
</dbReference>
<dbReference type="HAMAP" id="MF_01690">
    <property type="entry name" value="DapE"/>
    <property type="match status" value="1"/>
</dbReference>
<dbReference type="InterPro" id="IPR036264">
    <property type="entry name" value="Bact_exopeptidase_dim_dom"/>
</dbReference>
<dbReference type="InterPro" id="IPR005941">
    <property type="entry name" value="DapE_proteobac"/>
</dbReference>
<dbReference type="InterPro" id="IPR002933">
    <property type="entry name" value="Peptidase_M20"/>
</dbReference>
<dbReference type="InterPro" id="IPR011650">
    <property type="entry name" value="Peptidase_M20_dimer"/>
</dbReference>
<dbReference type="InterPro" id="IPR050072">
    <property type="entry name" value="Peptidase_M20A"/>
</dbReference>
<dbReference type="NCBIfam" id="TIGR01246">
    <property type="entry name" value="dapE_proteo"/>
    <property type="match status" value="1"/>
</dbReference>
<dbReference type="NCBIfam" id="NF009557">
    <property type="entry name" value="PRK13009.1"/>
    <property type="match status" value="1"/>
</dbReference>
<dbReference type="PANTHER" id="PTHR43808">
    <property type="entry name" value="ACETYLORNITHINE DEACETYLASE"/>
    <property type="match status" value="1"/>
</dbReference>
<dbReference type="PANTHER" id="PTHR43808:SF31">
    <property type="entry name" value="N-ACETYL-L-CITRULLINE DEACETYLASE"/>
    <property type="match status" value="1"/>
</dbReference>
<dbReference type="Pfam" id="PF07687">
    <property type="entry name" value="M20_dimer"/>
    <property type="match status" value="1"/>
</dbReference>
<dbReference type="Pfam" id="PF01546">
    <property type="entry name" value="Peptidase_M20"/>
    <property type="match status" value="1"/>
</dbReference>
<dbReference type="SUPFAM" id="SSF55031">
    <property type="entry name" value="Bacterial exopeptidase dimerisation domain"/>
    <property type="match status" value="1"/>
</dbReference>
<dbReference type="SUPFAM" id="SSF53187">
    <property type="entry name" value="Zn-dependent exopeptidases"/>
    <property type="match status" value="1"/>
</dbReference>